<reference key="1">
    <citation type="submission" date="2004-10" db="EMBL/GenBank/DDBJ databases">
        <title>Complete sequence of the Yak (Bos grunniens.) mitochondrial genome and its genetic relationship with related species.</title>
        <authorList>
            <person name="Gu Z."/>
            <person name="Zhao X."/>
            <person name="Li N."/>
            <person name="Wu C."/>
        </authorList>
    </citation>
    <scope>NUCLEOTIDE SEQUENCE [GENOMIC DNA]</scope>
</reference>
<comment type="function">
    <text evidence="2">Component of the cytochrome c oxidase, the last enzyme in the mitochondrial electron transport chain which drives oxidative phosphorylation. The respiratory chain contains 3 multisubunit complexes succinate dehydrogenase (complex II, CII), ubiquinol-cytochrome c oxidoreductase (cytochrome b-c1 complex, complex III, CIII) and cytochrome c oxidase (complex IV, CIV), that cooperate to transfer electrons derived from NADH and succinate to molecular oxygen, creating an electrochemical gradient over the inner membrane that drives transmembrane transport and the ATP synthase. Cytochrome c oxidase is the component of the respiratory chain that catalyzes the reduction of oxygen to water. Electrons originating from reduced cytochrome c in the intermembrane space (IMS) are transferred via the dinuclear copper A center (CU(A)) of subunit 2 and heme A of subunit 1 to the active site in subunit 1, a binuclear center (BNC) formed by heme A3 and copper B (CU(B)). The BNC reduces molecular oxygen to 2 water molecules using 4 electrons from cytochrome c in the IMS and 4 protons from the mitochondrial matrix.</text>
</comment>
<comment type="catalytic activity">
    <reaction evidence="2">
        <text>4 Fe(II)-[cytochrome c] + O2 + 8 H(+)(in) = 4 Fe(III)-[cytochrome c] + 2 H2O + 4 H(+)(out)</text>
        <dbReference type="Rhea" id="RHEA:11436"/>
        <dbReference type="Rhea" id="RHEA-COMP:10350"/>
        <dbReference type="Rhea" id="RHEA-COMP:14399"/>
        <dbReference type="ChEBI" id="CHEBI:15377"/>
        <dbReference type="ChEBI" id="CHEBI:15378"/>
        <dbReference type="ChEBI" id="CHEBI:15379"/>
        <dbReference type="ChEBI" id="CHEBI:29033"/>
        <dbReference type="ChEBI" id="CHEBI:29034"/>
        <dbReference type="EC" id="7.1.1.9"/>
    </reaction>
    <physiologicalReaction direction="left-to-right" evidence="2">
        <dbReference type="Rhea" id="RHEA:11437"/>
    </physiologicalReaction>
</comment>
<comment type="subunit">
    <text evidence="1">Component of the cytochrome c oxidase (complex IV, CIV), a multisubunit enzyme composed of 14 subunits. The complex is composed of a catalytic core of 3 subunits MT-CO1, MT-CO2 and MT-CO3, encoded in the mitochondrial DNA, and 11 supernumerary subunits COX4I, COX5A, COX5B, COX6A, COX6B, COX6C, COX7A, COX7B, COX7C, COX8 and NDUFA4, which are encoded in the nuclear genome. The complex exists as a monomer or a dimer and forms supercomplexes (SCs) in the inner mitochondrial membrane with NADH-ubiquinone oxidoreductase (complex I, CI) and ubiquinol-cytochrome c oxidoreductase (cytochrome b-c1 complex, complex III, CIII), resulting in different assemblies (supercomplex SCI(1)III(2)IV(1) and megacomplex MCI(2)III(2)IV(2)).</text>
</comment>
<comment type="subcellular location">
    <subcellularLocation>
        <location evidence="1">Mitochondrion inner membrane</location>
        <topology evidence="1">Multi-pass membrane protein</topology>
    </subcellularLocation>
</comment>
<comment type="similarity">
    <text evidence="3">Belongs to the cytochrome c oxidase subunit 3 family.</text>
</comment>
<dbReference type="EC" id="7.1.1.9"/>
<dbReference type="EMBL" id="AY684273">
    <property type="protein sequence ID" value="AAU89112.1"/>
    <property type="molecule type" value="Genomic_DNA"/>
</dbReference>
<dbReference type="SMR" id="Q5Y4Q4"/>
<dbReference type="CTD" id="4514"/>
<dbReference type="Proteomes" id="UP000694520">
    <property type="component" value="Unplaced"/>
</dbReference>
<dbReference type="GO" id="GO:0005743">
    <property type="term" value="C:mitochondrial inner membrane"/>
    <property type="evidence" value="ECO:0007669"/>
    <property type="project" value="UniProtKB-SubCell"/>
</dbReference>
<dbReference type="GO" id="GO:0045277">
    <property type="term" value="C:respiratory chain complex IV"/>
    <property type="evidence" value="ECO:0000250"/>
    <property type="project" value="UniProtKB"/>
</dbReference>
<dbReference type="GO" id="GO:0004129">
    <property type="term" value="F:cytochrome-c oxidase activity"/>
    <property type="evidence" value="ECO:0007669"/>
    <property type="project" value="UniProtKB-EC"/>
</dbReference>
<dbReference type="GO" id="GO:0006123">
    <property type="term" value="P:mitochondrial electron transport, cytochrome c to oxygen"/>
    <property type="evidence" value="ECO:0007669"/>
    <property type="project" value="TreeGrafter"/>
</dbReference>
<dbReference type="GO" id="GO:0008535">
    <property type="term" value="P:respiratory chain complex IV assembly"/>
    <property type="evidence" value="ECO:0000250"/>
    <property type="project" value="UniProtKB"/>
</dbReference>
<dbReference type="CDD" id="cd01665">
    <property type="entry name" value="Cyt_c_Oxidase_III"/>
    <property type="match status" value="1"/>
</dbReference>
<dbReference type="FunFam" id="1.10.287.70:FF:000048">
    <property type="entry name" value="Cytochrome c oxidase subunit 3"/>
    <property type="match status" value="1"/>
</dbReference>
<dbReference type="FunFam" id="1.20.120.80:FF:000002">
    <property type="entry name" value="Cytochrome c oxidase subunit 3"/>
    <property type="match status" value="1"/>
</dbReference>
<dbReference type="Gene3D" id="1.10.287.70">
    <property type="match status" value="1"/>
</dbReference>
<dbReference type="Gene3D" id="1.20.120.80">
    <property type="entry name" value="Cytochrome c oxidase, subunit III, four-helix bundle"/>
    <property type="match status" value="1"/>
</dbReference>
<dbReference type="InterPro" id="IPR024791">
    <property type="entry name" value="Cyt_c/ubiquinol_Oxase_su3"/>
</dbReference>
<dbReference type="InterPro" id="IPR033945">
    <property type="entry name" value="Cyt_c_oxase_su3_dom"/>
</dbReference>
<dbReference type="InterPro" id="IPR000298">
    <property type="entry name" value="Cyt_c_oxidase-like_su3"/>
</dbReference>
<dbReference type="InterPro" id="IPR035973">
    <property type="entry name" value="Cyt_c_oxidase_su3-like_sf"/>
</dbReference>
<dbReference type="InterPro" id="IPR013833">
    <property type="entry name" value="Cyt_c_oxidase_su3_a-hlx"/>
</dbReference>
<dbReference type="PANTHER" id="PTHR11403:SF7">
    <property type="entry name" value="CYTOCHROME C OXIDASE SUBUNIT 3"/>
    <property type="match status" value="1"/>
</dbReference>
<dbReference type="PANTHER" id="PTHR11403">
    <property type="entry name" value="CYTOCHROME C OXIDASE SUBUNIT III"/>
    <property type="match status" value="1"/>
</dbReference>
<dbReference type="Pfam" id="PF00510">
    <property type="entry name" value="COX3"/>
    <property type="match status" value="1"/>
</dbReference>
<dbReference type="SUPFAM" id="SSF81452">
    <property type="entry name" value="Cytochrome c oxidase subunit III-like"/>
    <property type="match status" value="1"/>
</dbReference>
<dbReference type="PROSITE" id="PS50253">
    <property type="entry name" value="COX3"/>
    <property type="match status" value="1"/>
</dbReference>
<evidence type="ECO:0000250" key="1">
    <source>
        <dbReference type="UniProtKB" id="P00415"/>
    </source>
</evidence>
<evidence type="ECO:0000250" key="2">
    <source>
        <dbReference type="UniProtKB" id="P00420"/>
    </source>
</evidence>
<evidence type="ECO:0000305" key="3"/>
<feature type="chain" id="PRO_0000253513" description="Cytochrome c oxidase subunit 3">
    <location>
        <begin position="1"/>
        <end position="260"/>
    </location>
</feature>
<feature type="topological domain" description="Mitochondrial matrix" evidence="1">
    <location>
        <begin position="1"/>
        <end position="15"/>
    </location>
</feature>
<feature type="transmembrane region" description="Helical; Name=I" evidence="1">
    <location>
        <begin position="16"/>
        <end position="34"/>
    </location>
</feature>
<feature type="topological domain" description="Mitochondrial intermembrane" evidence="1">
    <location>
        <begin position="35"/>
        <end position="40"/>
    </location>
</feature>
<feature type="transmembrane region" description="Helical; Name=II" evidence="1">
    <location>
        <begin position="41"/>
        <end position="66"/>
    </location>
</feature>
<feature type="topological domain" description="Mitochondrial matrix" evidence="1">
    <location>
        <begin position="67"/>
        <end position="72"/>
    </location>
</feature>
<feature type="transmembrane region" description="Helical; Name=III" evidence="1">
    <location>
        <begin position="73"/>
        <end position="105"/>
    </location>
</feature>
<feature type="topological domain" description="Mitochondrial intermembrane" evidence="1">
    <location>
        <begin position="106"/>
        <end position="128"/>
    </location>
</feature>
<feature type="transmembrane region" description="Helical; Name=IV" evidence="1">
    <location>
        <begin position="129"/>
        <end position="152"/>
    </location>
</feature>
<feature type="topological domain" description="Mitochondrial matrix" evidence="1">
    <location>
        <begin position="153"/>
        <end position="155"/>
    </location>
</feature>
<feature type="transmembrane region" description="Helical; Name=V" evidence="1">
    <location>
        <begin position="156"/>
        <end position="183"/>
    </location>
</feature>
<feature type="topological domain" description="Mitochondrial intermembrane" evidence="1">
    <location>
        <begin position="184"/>
        <end position="190"/>
    </location>
</feature>
<feature type="transmembrane region" description="Helical; Name=VI" evidence="1">
    <location>
        <begin position="191"/>
        <end position="223"/>
    </location>
</feature>
<feature type="topological domain" description="Mitochondrial matrix" evidence="1">
    <location>
        <begin position="224"/>
        <end position="232"/>
    </location>
</feature>
<feature type="transmembrane region" description="Helical; Name=VII" evidence="1">
    <location>
        <begin position="233"/>
        <end position="256"/>
    </location>
</feature>
<feature type="topological domain" description="Mitochondrial intermembrane" evidence="1">
    <location>
        <begin position="257"/>
        <end position="260"/>
    </location>
</feature>
<keyword id="KW-0472">Membrane</keyword>
<keyword id="KW-0496">Mitochondrion</keyword>
<keyword id="KW-0999">Mitochondrion inner membrane</keyword>
<keyword id="KW-1185">Reference proteome</keyword>
<keyword id="KW-1278">Translocase</keyword>
<keyword id="KW-0812">Transmembrane</keyword>
<keyword id="KW-1133">Transmembrane helix</keyword>
<sequence>MTHQTHAYHMVNPSPWPLTGALSALLMTSGLAMWFHFNSTALLMIGLTTNMLTMYQWWRDIIRESTFQGHHTPAVQKGLRYGMILFIISEVLFFTGFFWAFYHSSLAPTPELGGCWPPTGIHPLNPLEVPLLNTSVLLASGVSITWAHHSLMEGDRNHMLQALFITITLGVYFTLLQASEYYEAPFTISDGVYGSTFFVATGFHGLHVIIGSTFLIVCFFRQLKFHFTSNHHFGFEAAAWYWHFVDVVWLFLYVSIYWWG</sequence>
<name>COX3_BOSMU</name>
<proteinExistence type="inferred from homology"/>
<geneLocation type="mitochondrion"/>
<protein>
    <recommendedName>
        <fullName>Cytochrome c oxidase subunit 3</fullName>
        <ecNumber>7.1.1.9</ecNumber>
    </recommendedName>
    <alternativeName>
        <fullName>Cytochrome c oxidase polypeptide III</fullName>
    </alternativeName>
</protein>
<gene>
    <name type="primary">MT-CO3</name>
    <name type="synonym">COIII</name>
    <name type="synonym">COXIII</name>
    <name type="synonym">MTCO3</name>
</gene>
<accession>Q5Y4Q4</accession>
<organism>
    <name type="scientific">Bos mutus grunniens</name>
    <name type="common">Wild yak</name>
    <name type="synonym">Bos grunniens</name>
    <dbReference type="NCBI Taxonomy" id="30521"/>
    <lineage>
        <taxon>Eukaryota</taxon>
        <taxon>Metazoa</taxon>
        <taxon>Chordata</taxon>
        <taxon>Craniata</taxon>
        <taxon>Vertebrata</taxon>
        <taxon>Euteleostomi</taxon>
        <taxon>Mammalia</taxon>
        <taxon>Eutheria</taxon>
        <taxon>Laurasiatheria</taxon>
        <taxon>Artiodactyla</taxon>
        <taxon>Ruminantia</taxon>
        <taxon>Pecora</taxon>
        <taxon>Bovidae</taxon>
        <taxon>Bovinae</taxon>
        <taxon>Bos</taxon>
    </lineage>
</organism>